<name>NRFA_SHIFL</name>
<comment type="function">
    <text evidence="1">Catalyzes the reduction of nitrite to ammonia, consuming six electrons in the process.</text>
</comment>
<comment type="catalytic activity">
    <reaction evidence="1">
        <text>6 Fe(III)-[cytochrome c] + NH4(+) + 2 H2O = 6 Fe(II)-[cytochrome c] + nitrite + 8 H(+)</text>
        <dbReference type="Rhea" id="RHEA:13089"/>
        <dbReference type="Rhea" id="RHEA-COMP:10350"/>
        <dbReference type="Rhea" id="RHEA-COMP:14399"/>
        <dbReference type="ChEBI" id="CHEBI:15377"/>
        <dbReference type="ChEBI" id="CHEBI:15378"/>
        <dbReference type="ChEBI" id="CHEBI:16301"/>
        <dbReference type="ChEBI" id="CHEBI:28938"/>
        <dbReference type="ChEBI" id="CHEBI:29033"/>
        <dbReference type="ChEBI" id="CHEBI:29034"/>
        <dbReference type="EC" id="1.7.2.2"/>
    </reaction>
</comment>
<comment type="cofactor">
    <cofactor evidence="1">
        <name>Ca(2+)</name>
        <dbReference type="ChEBI" id="CHEBI:29108"/>
    </cofactor>
    <text evidence="1">Binds 1 Ca(2+) ion per monomer.</text>
</comment>
<comment type="cofactor">
    <cofactor evidence="1">
        <name>heme c</name>
        <dbReference type="ChEBI" id="CHEBI:61717"/>
    </cofactor>
    <text evidence="1">Binds 5 heme c groups covalently per monomer.</text>
</comment>
<comment type="pathway">
    <text evidence="1">Nitrogen metabolism; nitrate reduction (assimilation).</text>
</comment>
<comment type="subcellular location">
    <subcellularLocation>
        <location evidence="1">Periplasm</location>
    </subcellularLocation>
</comment>
<comment type="similarity">
    <text evidence="1">Belongs to the cytochrome c-552 family.</text>
</comment>
<keyword id="KW-0106">Calcium</keyword>
<keyword id="KW-0249">Electron transport</keyword>
<keyword id="KW-0349">Heme</keyword>
<keyword id="KW-0408">Iron</keyword>
<keyword id="KW-0479">Metal-binding</keyword>
<keyword id="KW-0560">Oxidoreductase</keyword>
<keyword id="KW-0574">Periplasm</keyword>
<keyword id="KW-1185">Reference proteome</keyword>
<keyword id="KW-0732">Signal</keyword>
<keyword id="KW-0813">Transport</keyword>
<feature type="signal peptide" evidence="1">
    <location>
        <begin position="1"/>
        <end position="26"/>
    </location>
</feature>
<feature type="chain" id="PRO_0000268979" description="Cytochrome c-552">
    <location>
        <begin position="27"/>
        <end position="478"/>
    </location>
</feature>
<feature type="binding site" description="axial binding residue" evidence="1">
    <location>
        <position position="94"/>
    </location>
    <ligand>
        <name>heme c</name>
        <dbReference type="ChEBI" id="CHEBI:61717"/>
        <label>3</label>
    </ligand>
    <ligandPart>
        <name>Fe</name>
        <dbReference type="ChEBI" id="CHEBI:18248"/>
    </ligandPart>
</feature>
<feature type="binding site" description="covalent" evidence="1">
    <location>
        <position position="122"/>
    </location>
    <ligand>
        <name>heme</name>
        <dbReference type="ChEBI" id="CHEBI:30413"/>
        <label>1</label>
    </ligand>
</feature>
<feature type="binding site" description="covalent" evidence="1">
    <location>
        <position position="125"/>
    </location>
    <ligand>
        <name>heme</name>
        <dbReference type="ChEBI" id="CHEBI:30413"/>
        <label>1</label>
    </ligand>
</feature>
<feature type="binding site" description="axial binding residue" evidence="1">
    <location>
        <position position="126"/>
    </location>
    <ligand>
        <name>heme</name>
        <dbReference type="ChEBI" id="CHEBI:30413"/>
        <label>1</label>
    </ligand>
    <ligandPart>
        <name>Fe</name>
        <dbReference type="ChEBI" id="CHEBI:18248"/>
    </ligandPart>
</feature>
<feature type="binding site" description="covalent" evidence="1">
    <location>
        <position position="160"/>
    </location>
    <ligand>
        <name>heme c</name>
        <dbReference type="ChEBI" id="CHEBI:61717"/>
        <label>2</label>
    </ligand>
</feature>
<feature type="binding site" description="covalent" evidence="1">
    <location>
        <position position="163"/>
    </location>
    <ligand>
        <name>heme c</name>
        <dbReference type="ChEBI" id="CHEBI:61717"/>
        <label>2</label>
    </ligand>
</feature>
<feature type="binding site" description="axial binding residue" evidence="1">
    <location>
        <position position="164"/>
    </location>
    <ligand>
        <name>heme c</name>
        <dbReference type="ChEBI" id="CHEBI:61717"/>
        <label>2</label>
    </ligand>
    <ligandPart>
        <name>Fe</name>
        <dbReference type="ChEBI" id="CHEBI:18248"/>
    </ligandPart>
</feature>
<feature type="binding site" description="covalent" evidence="1">
    <location>
        <position position="209"/>
    </location>
    <ligand>
        <name>heme c</name>
        <dbReference type="ChEBI" id="CHEBI:61717"/>
        <label>3</label>
    </ligand>
</feature>
<feature type="binding site" description="covalent" evidence="1">
    <location>
        <position position="212"/>
    </location>
    <ligand>
        <name>heme c</name>
        <dbReference type="ChEBI" id="CHEBI:61717"/>
        <label>3</label>
    </ligand>
</feature>
<feature type="binding site" description="axial binding residue" evidence="1">
    <location>
        <position position="213"/>
    </location>
    <ligand>
        <name>heme c</name>
        <dbReference type="ChEBI" id="CHEBI:61717"/>
        <label>3</label>
    </ligand>
    <ligandPart>
        <name>Fe</name>
        <dbReference type="ChEBI" id="CHEBI:18248"/>
    </ligandPart>
</feature>
<feature type="binding site" evidence="1">
    <location>
        <position position="215"/>
    </location>
    <ligand>
        <name>Ca(2+)</name>
        <dbReference type="ChEBI" id="CHEBI:29108"/>
    </ligand>
</feature>
<feature type="binding site" evidence="1">
    <location>
        <position position="216"/>
    </location>
    <ligand>
        <name>Ca(2+)</name>
        <dbReference type="ChEBI" id="CHEBI:29108"/>
    </ligand>
</feature>
<feature type="binding site" evidence="1">
    <location>
        <position position="216"/>
    </location>
    <ligand>
        <name>substrate</name>
    </ligand>
</feature>
<feature type="binding site" evidence="1">
    <location>
        <position position="261"/>
    </location>
    <ligand>
        <name>Ca(2+)</name>
        <dbReference type="ChEBI" id="CHEBI:29108"/>
    </ligand>
</feature>
<feature type="binding site" evidence="1">
    <location>
        <position position="263"/>
    </location>
    <ligand>
        <name>Ca(2+)</name>
        <dbReference type="ChEBI" id="CHEBI:29108"/>
    </ligand>
</feature>
<feature type="binding site" evidence="1">
    <location>
        <position position="264"/>
    </location>
    <ligand>
        <name>substrate</name>
    </ligand>
</feature>
<feature type="binding site" description="axial binding residue" evidence="1">
    <location>
        <position position="275"/>
    </location>
    <ligand>
        <name>heme c</name>
        <dbReference type="ChEBI" id="CHEBI:61717"/>
        <label>5</label>
    </ligand>
    <ligandPart>
        <name>Fe</name>
        <dbReference type="ChEBI" id="CHEBI:18248"/>
    </ligandPart>
</feature>
<feature type="binding site" description="covalent" evidence="1">
    <location>
        <position position="282"/>
    </location>
    <ligand>
        <name>heme c</name>
        <dbReference type="ChEBI" id="CHEBI:61717"/>
        <label>4</label>
    </ligand>
</feature>
<feature type="binding site" description="covalent" evidence="1">
    <location>
        <position position="285"/>
    </location>
    <ligand>
        <name>heme c</name>
        <dbReference type="ChEBI" id="CHEBI:61717"/>
        <label>4</label>
    </ligand>
</feature>
<feature type="binding site" description="axial binding residue" evidence="1">
    <location>
        <position position="286"/>
    </location>
    <ligand>
        <name>heme c</name>
        <dbReference type="ChEBI" id="CHEBI:61717"/>
        <label>4</label>
    </ligand>
    <ligandPart>
        <name>Fe</name>
        <dbReference type="ChEBI" id="CHEBI:18248"/>
    </ligandPart>
</feature>
<feature type="binding site" description="axial binding residue" evidence="1">
    <location>
        <position position="301"/>
    </location>
    <ligand>
        <name>heme c</name>
        <dbReference type="ChEBI" id="CHEBI:61717"/>
        <label>2</label>
    </ligand>
    <ligandPart>
        <name>Fe</name>
        <dbReference type="ChEBI" id="CHEBI:18248"/>
    </ligandPart>
</feature>
<feature type="binding site" description="covalent" evidence="1">
    <location>
        <position position="314"/>
    </location>
    <ligand>
        <name>heme c</name>
        <dbReference type="ChEBI" id="CHEBI:61717"/>
        <label>5</label>
    </ligand>
</feature>
<feature type="binding site" description="covalent" evidence="1">
    <location>
        <position position="317"/>
    </location>
    <ligand>
        <name>heme c</name>
        <dbReference type="ChEBI" id="CHEBI:61717"/>
        <label>5</label>
    </ligand>
</feature>
<feature type="binding site" description="axial binding residue" evidence="1">
    <location>
        <position position="318"/>
    </location>
    <ligand>
        <name>heme c</name>
        <dbReference type="ChEBI" id="CHEBI:61717"/>
        <label>5</label>
    </ligand>
    <ligandPart>
        <name>Fe</name>
        <dbReference type="ChEBI" id="CHEBI:18248"/>
    </ligandPart>
</feature>
<feature type="binding site" description="axial binding residue" evidence="1">
    <location>
        <position position="393"/>
    </location>
    <ligand>
        <name>heme c</name>
        <dbReference type="ChEBI" id="CHEBI:61717"/>
        <label>4</label>
    </ligand>
    <ligandPart>
        <name>Fe</name>
        <dbReference type="ChEBI" id="CHEBI:18248"/>
    </ligandPart>
</feature>
<reference key="1">
    <citation type="journal article" date="2002" name="Nucleic Acids Res.">
        <title>Genome sequence of Shigella flexneri 2a: insights into pathogenicity through comparison with genomes of Escherichia coli K12 and O157.</title>
        <authorList>
            <person name="Jin Q."/>
            <person name="Yuan Z."/>
            <person name="Xu J."/>
            <person name="Wang Y."/>
            <person name="Shen Y."/>
            <person name="Lu W."/>
            <person name="Wang J."/>
            <person name="Liu H."/>
            <person name="Yang J."/>
            <person name="Yang F."/>
            <person name="Zhang X."/>
            <person name="Zhang J."/>
            <person name="Yang G."/>
            <person name="Wu H."/>
            <person name="Qu D."/>
            <person name="Dong J."/>
            <person name="Sun L."/>
            <person name="Xue Y."/>
            <person name="Zhao A."/>
            <person name="Gao Y."/>
            <person name="Zhu J."/>
            <person name="Kan B."/>
            <person name="Ding K."/>
            <person name="Chen S."/>
            <person name="Cheng H."/>
            <person name="Yao Z."/>
            <person name="He B."/>
            <person name="Chen R."/>
            <person name="Ma D."/>
            <person name="Qiang B."/>
            <person name="Wen Y."/>
            <person name="Hou Y."/>
            <person name="Yu J."/>
        </authorList>
    </citation>
    <scope>NUCLEOTIDE SEQUENCE [LARGE SCALE GENOMIC DNA]</scope>
    <source>
        <strain>301 / Serotype 2a</strain>
    </source>
</reference>
<reference key="2">
    <citation type="journal article" date="2003" name="Infect. Immun.">
        <title>Complete genome sequence and comparative genomics of Shigella flexneri serotype 2a strain 2457T.</title>
        <authorList>
            <person name="Wei J."/>
            <person name="Goldberg M.B."/>
            <person name="Burland V."/>
            <person name="Venkatesan M.M."/>
            <person name="Deng W."/>
            <person name="Fournier G."/>
            <person name="Mayhew G.F."/>
            <person name="Plunkett G. III"/>
            <person name="Rose D.J."/>
            <person name="Darling A."/>
            <person name="Mau B."/>
            <person name="Perna N.T."/>
            <person name="Payne S.M."/>
            <person name="Runyen-Janecky L.J."/>
            <person name="Zhou S."/>
            <person name="Schwartz D.C."/>
            <person name="Blattner F.R."/>
        </authorList>
    </citation>
    <scope>NUCLEOTIDE SEQUENCE [LARGE SCALE GENOMIC DNA]</scope>
    <source>
        <strain>ATCC 700930 / 2457T / Serotype 2a</strain>
    </source>
</reference>
<organism>
    <name type="scientific">Shigella flexneri</name>
    <dbReference type="NCBI Taxonomy" id="623"/>
    <lineage>
        <taxon>Bacteria</taxon>
        <taxon>Pseudomonadati</taxon>
        <taxon>Pseudomonadota</taxon>
        <taxon>Gammaproteobacteria</taxon>
        <taxon>Enterobacterales</taxon>
        <taxon>Enterobacteriaceae</taxon>
        <taxon>Shigella</taxon>
    </lineage>
</organism>
<gene>
    <name evidence="1" type="primary">nrfA</name>
    <name type="ordered locus">SF4130</name>
    <name type="ordered locus">S3597</name>
</gene>
<protein>
    <recommendedName>
        <fullName evidence="1">Cytochrome c-552</fullName>
        <ecNumber evidence="1">1.7.2.2</ecNumber>
    </recommendedName>
    <alternativeName>
        <fullName evidence="1">Ammonia-forming cytochrome c nitrite reductase</fullName>
        <shortName evidence="1">Cytochrome c nitrite reductase</shortName>
    </alternativeName>
</protein>
<proteinExistence type="inferred from homology"/>
<accession>Q83P93</accession>
<accession>Q7UBC1</accession>
<dbReference type="EC" id="1.7.2.2" evidence="1"/>
<dbReference type="EMBL" id="AE005674">
    <property type="protein sequence ID" value="AAN45553.2"/>
    <property type="molecule type" value="Genomic_DNA"/>
</dbReference>
<dbReference type="EMBL" id="AE014073">
    <property type="protein sequence ID" value="AAP18641.1"/>
    <property type="molecule type" value="Genomic_DNA"/>
</dbReference>
<dbReference type="RefSeq" id="NP_709846.2">
    <property type="nucleotide sequence ID" value="NC_004337.2"/>
</dbReference>
<dbReference type="RefSeq" id="WP_011069594.1">
    <property type="nucleotide sequence ID" value="NZ_WPGW01000075.1"/>
</dbReference>
<dbReference type="SMR" id="Q83P93"/>
<dbReference type="STRING" id="198214.SF4130"/>
<dbReference type="PaxDb" id="198214-SF4130"/>
<dbReference type="GeneID" id="1026149"/>
<dbReference type="KEGG" id="sfl:SF4130"/>
<dbReference type="KEGG" id="sfx:S3597"/>
<dbReference type="PATRIC" id="fig|198214.7.peg.4873"/>
<dbReference type="HOGENOM" id="CLU_035040_1_0_6"/>
<dbReference type="UniPathway" id="UPA00653"/>
<dbReference type="Proteomes" id="UP000001006">
    <property type="component" value="Chromosome"/>
</dbReference>
<dbReference type="Proteomes" id="UP000002673">
    <property type="component" value="Chromosome"/>
</dbReference>
<dbReference type="GO" id="GO:0030288">
    <property type="term" value="C:outer membrane-bounded periplasmic space"/>
    <property type="evidence" value="ECO:0007669"/>
    <property type="project" value="TreeGrafter"/>
</dbReference>
<dbReference type="GO" id="GO:0005509">
    <property type="term" value="F:calcium ion binding"/>
    <property type="evidence" value="ECO:0007669"/>
    <property type="project" value="UniProtKB-UniRule"/>
</dbReference>
<dbReference type="GO" id="GO:0020037">
    <property type="term" value="F:heme binding"/>
    <property type="evidence" value="ECO:0007669"/>
    <property type="project" value="InterPro"/>
</dbReference>
<dbReference type="GO" id="GO:0005506">
    <property type="term" value="F:iron ion binding"/>
    <property type="evidence" value="ECO:0007669"/>
    <property type="project" value="UniProtKB-UniRule"/>
</dbReference>
<dbReference type="GO" id="GO:0042279">
    <property type="term" value="F:nitrite reductase (cytochrome, ammonia-forming) activity"/>
    <property type="evidence" value="ECO:0007669"/>
    <property type="project" value="UniProtKB-UniRule"/>
</dbReference>
<dbReference type="GO" id="GO:0019645">
    <property type="term" value="P:anaerobic electron transport chain"/>
    <property type="evidence" value="ECO:0007669"/>
    <property type="project" value="TreeGrafter"/>
</dbReference>
<dbReference type="GO" id="GO:0042128">
    <property type="term" value="P:nitrate assimilation"/>
    <property type="evidence" value="ECO:0007669"/>
    <property type="project" value="UniProtKB-UniRule"/>
</dbReference>
<dbReference type="CDD" id="cd00548">
    <property type="entry name" value="NrfA-like"/>
    <property type="match status" value="1"/>
</dbReference>
<dbReference type="FunFam" id="1.10.1130.10:FF:000002">
    <property type="entry name" value="Cytochrome c-552"/>
    <property type="match status" value="1"/>
</dbReference>
<dbReference type="FunFam" id="1.20.140.10:FF:000014">
    <property type="entry name" value="Cytochrome c-552"/>
    <property type="match status" value="1"/>
</dbReference>
<dbReference type="Gene3D" id="1.20.140.10">
    <property type="entry name" value="Butyryl-CoA Dehydrogenase, subunit A, domain 3"/>
    <property type="match status" value="1"/>
</dbReference>
<dbReference type="Gene3D" id="1.10.1130.10">
    <property type="entry name" value="Flavocytochrome C3, Chain A"/>
    <property type="match status" value="1"/>
</dbReference>
<dbReference type="HAMAP" id="MF_01182">
    <property type="entry name" value="Cytochrom_C552"/>
    <property type="match status" value="1"/>
</dbReference>
<dbReference type="InterPro" id="IPR003321">
    <property type="entry name" value="Cyt_c552"/>
</dbReference>
<dbReference type="InterPro" id="IPR017570">
    <property type="entry name" value="Cyt_c_NO2Rdtase_formate-dep"/>
</dbReference>
<dbReference type="InterPro" id="IPR036280">
    <property type="entry name" value="Multihaem_cyt_sf"/>
</dbReference>
<dbReference type="NCBIfam" id="TIGR03152">
    <property type="entry name" value="cyto_c552_HCOOH"/>
    <property type="match status" value="1"/>
</dbReference>
<dbReference type="NCBIfam" id="NF008339">
    <property type="entry name" value="PRK11125.1"/>
    <property type="match status" value="1"/>
</dbReference>
<dbReference type="PANTHER" id="PTHR30633:SF0">
    <property type="entry name" value="CYTOCHROME C-552"/>
    <property type="match status" value="1"/>
</dbReference>
<dbReference type="PANTHER" id="PTHR30633">
    <property type="entry name" value="CYTOCHROME C-552 RESPIRATORY NITRITE REDUCTASE"/>
    <property type="match status" value="1"/>
</dbReference>
<dbReference type="Pfam" id="PF02335">
    <property type="entry name" value="Cytochrom_C552"/>
    <property type="match status" value="1"/>
</dbReference>
<dbReference type="PIRSF" id="PIRSF000243">
    <property type="entry name" value="Cyt_c552"/>
    <property type="match status" value="1"/>
</dbReference>
<dbReference type="SUPFAM" id="SSF48695">
    <property type="entry name" value="Multiheme cytochromes"/>
    <property type="match status" value="1"/>
</dbReference>
<dbReference type="PROSITE" id="PS51008">
    <property type="entry name" value="MULTIHEME_CYTC"/>
    <property type="match status" value="1"/>
</dbReference>
<sequence length="478" mass="53743">MTRIKINARRIFSLLIPFFFFTSVHAEQTAAPAKPVTVEAKNETFAPQHHDQYLSWKATSEQSERVDALAEDPRLVILWAGYPFSRDYNKPRGHAFAVTDVRETLRTGAPKNAEDGPLPMACWSCKSPDVARLIQKDGEDGYFHGKWARGGPEIVNNLGCADCHNTASPEFAKGKPELTLSRPYAARAMEAIGKPFEKAGRFDQQSMVCGQCHVEYYFDGKNKAVKFPWDDGMKVENMEQYYDKIAFSDWTNSLSKTPMLKAQHPEYETWTAGIHGKNNVTCIDCHMPKVQNAEGKLYTDHKIGNPFDNFAQTCANCHTQDKAALQKVVAERKQSINDLKIKVEDQLVHAHFEAKAALDAGATEAEMKPIQDDIRHAQWRWDLAIASHGIHMHAPEEGLRMLGTAMDKAADARTKLARLLATKGITHEIQIPDISTKEKAQQAIGLNMEQIKAEKQDFIKTVIPQWEEQARKNGLLSQ</sequence>
<evidence type="ECO:0000255" key="1">
    <source>
        <dbReference type="HAMAP-Rule" id="MF_01182"/>
    </source>
</evidence>